<gene>
    <name evidence="1" type="primary">cheD2</name>
    <name type="synonym">cheD1</name>
    <name type="ordered locus">MA_3064</name>
</gene>
<dbReference type="EC" id="3.5.1.44" evidence="1"/>
<dbReference type="EMBL" id="AE010299">
    <property type="protein sequence ID" value="AAM06437.1"/>
    <property type="molecule type" value="Genomic_DNA"/>
</dbReference>
<dbReference type="RefSeq" id="WP_011023003.1">
    <property type="nucleotide sequence ID" value="NC_003552.1"/>
</dbReference>
<dbReference type="SMR" id="Q8TLH2"/>
<dbReference type="STRING" id="188937.MA_3064"/>
<dbReference type="EnsemblBacteria" id="AAM06437">
    <property type="protein sequence ID" value="AAM06437"/>
    <property type="gene ID" value="MA_3064"/>
</dbReference>
<dbReference type="GeneID" id="1474958"/>
<dbReference type="KEGG" id="mac:MA_3064"/>
<dbReference type="HOGENOM" id="CLU_087854_2_0_2"/>
<dbReference type="InParanoid" id="Q8TLH2"/>
<dbReference type="OrthoDB" id="10499at2157"/>
<dbReference type="PhylomeDB" id="Q8TLH2"/>
<dbReference type="Proteomes" id="UP000002487">
    <property type="component" value="Chromosome"/>
</dbReference>
<dbReference type="GO" id="GO:0050568">
    <property type="term" value="F:protein-glutamine glutaminase activity"/>
    <property type="evidence" value="ECO:0007669"/>
    <property type="project" value="UniProtKB-UniRule"/>
</dbReference>
<dbReference type="GO" id="GO:0006935">
    <property type="term" value="P:chemotaxis"/>
    <property type="evidence" value="ECO:0007669"/>
    <property type="project" value="UniProtKB-UniRule"/>
</dbReference>
<dbReference type="CDD" id="cd16352">
    <property type="entry name" value="CheD"/>
    <property type="match status" value="1"/>
</dbReference>
<dbReference type="Gene3D" id="3.30.1330.200">
    <property type="match status" value="1"/>
</dbReference>
<dbReference type="HAMAP" id="MF_01440">
    <property type="entry name" value="CheD"/>
    <property type="match status" value="1"/>
</dbReference>
<dbReference type="InterPro" id="IPR038592">
    <property type="entry name" value="CheD-like_sf"/>
</dbReference>
<dbReference type="InterPro" id="IPR005659">
    <property type="entry name" value="Chemorcpt_Glu_NH3ase_CheD"/>
</dbReference>
<dbReference type="InterPro" id="IPR011324">
    <property type="entry name" value="Cytotoxic_necrot_fac-like_cat"/>
</dbReference>
<dbReference type="PANTHER" id="PTHR35147">
    <property type="entry name" value="CHEMORECEPTOR GLUTAMINE DEAMIDASE CHED-RELATED"/>
    <property type="match status" value="1"/>
</dbReference>
<dbReference type="PANTHER" id="PTHR35147:SF1">
    <property type="entry name" value="CHEMORECEPTOR GLUTAMINE DEAMIDASE CHED-RELATED"/>
    <property type="match status" value="1"/>
</dbReference>
<dbReference type="Pfam" id="PF03975">
    <property type="entry name" value="CheD"/>
    <property type="match status" value="1"/>
</dbReference>
<dbReference type="SUPFAM" id="SSF64438">
    <property type="entry name" value="CNF1/YfiH-like putative cysteine hydrolases"/>
    <property type="match status" value="1"/>
</dbReference>
<reference key="1">
    <citation type="journal article" date="2002" name="Genome Res.">
        <title>The genome of Methanosarcina acetivorans reveals extensive metabolic and physiological diversity.</title>
        <authorList>
            <person name="Galagan J.E."/>
            <person name="Nusbaum C."/>
            <person name="Roy A."/>
            <person name="Endrizzi M.G."/>
            <person name="Macdonald P."/>
            <person name="FitzHugh W."/>
            <person name="Calvo S."/>
            <person name="Engels R."/>
            <person name="Smirnov S."/>
            <person name="Atnoor D."/>
            <person name="Brown A."/>
            <person name="Allen N."/>
            <person name="Naylor J."/>
            <person name="Stange-Thomann N."/>
            <person name="DeArellano K."/>
            <person name="Johnson R."/>
            <person name="Linton L."/>
            <person name="McEwan P."/>
            <person name="McKernan K."/>
            <person name="Talamas J."/>
            <person name="Tirrell A."/>
            <person name="Ye W."/>
            <person name="Zimmer A."/>
            <person name="Barber R.D."/>
            <person name="Cann I."/>
            <person name="Graham D.E."/>
            <person name="Grahame D.A."/>
            <person name="Guss A.M."/>
            <person name="Hedderich R."/>
            <person name="Ingram-Smith C."/>
            <person name="Kuettner H.C."/>
            <person name="Krzycki J.A."/>
            <person name="Leigh J.A."/>
            <person name="Li W."/>
            <person name="Liu J."/>
            <person name="Mukhopadhyay B."/>
            <person name="Reeve J.N."/>
            <person name="Smith K."/>
            <person name="Springer T.A."/>
            <person name="Umayam L.A."/>
            <person name="White O."/>
            <person name="White R.H."/>
            <person name="de Macario E.C."/>
            <person name="Ferry J.G."/>
            <person name="Jarrell K.F."/>
            <person name="Jing H."/>
            <person name="Macario A.J.L."/>
            <person name="Paulsen I.T."/>
            <person name="Pritchett M."/>
            <person name="Sowers K.R."/>
            <person name="Swanson R.V."/>
            <person name="Zinder S.H."/>
            <person name="Lander E."/>
            <person name="Metcalf W.W."/>
            <person name="Birren B."/>
        </authorList>
    </citation>
    <scope>NUCLEOTIDE SEQUENCE [LARGE SCALE GENOMIC DNA]</scope>
    <source>
        <strain>ATCC 35395 / DSM 2834 / JCM 12185 / C2A</strain>
    </source>
</reference>
<organism>
    <name type="scientific">Methanosarcina acetivorans (strain ATCC 35395 / DSM 2834 / JCM 12185 / C2A)</name>
    <dbReference type="NCBI Taxonomy" id="188937"/>
    <lineage>
        <taxon>Archaea</taxon>
        <taxon>Methanobacteriati</taxon>
        <taxon>Methanobacteriota</taxon>
        <taxon>Stenosarchaea group</taxon>
        <taxon>Methanomicrobia</taxon>
        <taxon>Methanosarcinales</taxon>
        <taxon>Methanosarcinaceae</taxon>
        <taxon>Methanosarcina</taxon>
    </lineage>
</organism>
<name>CHED2_METAC</name>
<accession>Q8TLH2</accession>
<sequence>MSDDILFVSNGNGKAIFLTSRAVLVKSFCSLSKTCSFKDSCQSCEIVDAAKSYLMGKKSDLNVKSLDGELSAGIGEYKIGKNVLLKVMGLGSCIGVILSDVSTGICGIAHVLLPGASNSGEAKYAETAIENMFEDMIRMGARKNRITAKFAGGAQVFKHMSLDILKIGDRNAISVEETLVKRNIPILAKDVGGEVGRNVIFNPVDGSMIVKYTKGEVLWL</sequence>
<feature type="chain" id="PRO_0000251090" description="Probable chemoreceptor glutamine deamidase CheD 2">
    <location>
        <begin position="1"/>
        <end position="220"/>
    </location>
</feature>
<evidence type="ECO:0000255" key="1">
    <source>
        <dbReference type="HAMAP-Rule" id="MF_01440"/>
    </source>
</evidence>
<proteinExistence type="inferred from homology"/>
<protein>
    <recommendedName>
        <fullName evidence="1">Probable chemoreceptor glutamine deamidase CheD 2</fullName>
        <ecNumber evidence="1">3.5.1.44</ecNumber>
    </recommendedName>
</protein>
<keyword id="KW-0145">Chemotaxis</keyword>
<keyword id="KW-0378">Hydrolase</keyword>
<keyword id="KW-1185">Reference proteome</keyword>
<comment type="function">
    <text evidence="1">Probably deamidates glutamine residues to glutamate on methyl-accepting chemotaxis receptors (MCPs), playing an important role in chemotaxis.</text>
</comment>
<comment type="catalytic activity">
    <reaction evidence="1">
        <text>L-glutaminyl-[protein] + H2O = L-glutamyl-[protein] + NH4(+)</text>
        <dbReference type="Rhea" id="RHEA:16441"/>
        <dbReference type="Rhea" id="RHEA-COMP:10207"/>
        <dbReference type="Rhea" id="RHEA-COMP:10208"/>
        <dbReference type="ChEBI" id="CHEBI:15377"/>
        <dbReference type="ChEBI" id="CHEBI:28938"/>
        <dbReference type="ChEBI" id="CHEBI:29973"/>
        <dbReference type="ChEBI" id="CHEBI:30011"/>
        <dbReference type="EC" id="3.5.1.44"/>
    </reaction>
</comment>
<comment type="similarity">
    <text evidence="1">Belongs to the CheD family.</text>
</comment>